<protein>
    <recommendedName>
        <fullName>Vacuolar cation/proton exchanger 1c</fullName>
    </recommendedName>
    <alternativeName>
        <fullName>Ca(2+)/H(+) exchanger 1c</fullName>
    </alternativeName>
    <alternativeName>
        <fullName>OsCAX1c</fullName>
    </alternativeName>
</protein>
<sequence>MAPPESSHHHLLESGLLEVSKAPSAAVAAEEEEKKEAAAWTPSSSSSMTGRKIKSEASPLLRRLLGGPAAQLQEVLLGTKLYPLFSAVPLAVAAESLRLGRVWVFAFSLIGLAPLAERVSFLSEHIANTVGPTAGGIMNATCGNVPELIIALFALHKNKMEILKWSLLGSILSNLLLVLGSSLLFGGIVNIGKERPLDKRQADVSIGLLLLGVLCHIATLVSKYTSSTGDSINSSSVMQLSRSCAIVMLIAYFGSLMFQLKTHRQIFELEEDSSDSSSSEDDATDKSVIGFASAMVWLIGMAVVTAMLSSYVVTTIEEASESMGIPVRFISIILLPIVGNAAEHAGAIIFAFKNKIDISLGITLGSATQISMLVVPVILIVSWVNAIPMDLDFNLLETGSLAMAVITTAFTLQDDKWHYLKGLNLVFSYIVIAVCFFVMKALPTLKKEDD</sequence>
<accession>Q5KTQ9</accession>
<accession>A0A0P0VI98</accession>
<accession>C7IY34</accession>
<accession>Q6Z6R2</accession>
<proteinExistence type="evidence at transcript level"/>
<keyword id="KW-0050">Antiport</keyword>
<keyword id="KW-0106">Calcium</keyword>
<keyword id="KW-0109">Calcium transport</keyword>
<keyword id="KW-0406">Ion transport</keyword>
<keyword id="KW-0472">Membrane</keyword>
<keyword id="KW-1185">Reference proteome</keyword>
<keyword id="KW-0812">Transmembrane</keyword>
<keyword id="KW-1133">Transmembrane helix</keyword>
<keyword id="KW-0813">Transport</keyword>
<keyword id="KW-0926">Vacuole</keyword>
<feature type="chain" id="PRO_0000209499" description="Vacuolar cation/proton exchanger 1c">
    <location>
        <begin position="1"/>
        <end position="450"/>
    </location>
</feature>
<feature type="topological domain" description="Cytoplasmic" evidence="1">
    <location>
        <begin position="1"/>
        <end position="73"/>
    </location>
</feature>
<feature type="transmembrane region" description="Helical" evidence="1">
    <location>
        <begin position="74"/>
        <end position="94"/>
    </location>
</feature>
<feature type="topological domain" description="Extracellular" evidence="1">
    <location>
        <begin position="95"/>
        <end position="101"/>
    </location>
</feature>
<feature type="transmembrane region" description="Helical" evidence="1">
    <location>
        <begin position="102"/>
        <end position="122"/>
    </location>
</feature>
<feature type="topological domain" description="Cytoplasmic" evidence="1">
    <location>
        <begin position="123"/>
        <end position="134"/>
    </location>
</feature>
<feature type="transmembrane region" description="Helical" evidence="1">
    <location>
        <begin position="135"/>
        <end position="155"/>
    </location>
</feature>
<feature type="topological domain" description="Extracellular" evidence="1">
    <location>
        <begin position="156"/>
        <end position="170"/>
    </location>
</feature>
<feature type="transmembrane region" description="Helical" evidence="1">
    <location>
        <begin position="171"/>
        <end position="191"/>
    </location>
</feature>
<feature type="topological domain" description="Cytoplasmic" evidence="1">
    <location>
        <begin position="192"/>
        <end position="201"/>
    </location>
</feature>
<feature type="transmembrane region" description="Helical" evidence="1">
    <location>
        <begin position="202"/>
        <end position="222"/>
    </location>
</feature>
<feature type="topological domain" description="Extracellular" evidence="1">
    <location>
        <begin position="223"/>
        <end position="239"/>
    </location>
</feature>
<feature type="transmembrane region" description="Helical" evidence="1">
    <location>
        <begin position="240"/>
        <end position="260"/>
    </location>
</feature>
<feature type="topological domain" description="Cytoplasmic" evidence="1">
    <location>
        <begin position="261"/>
        <end position="287"/>
    </location>
</feature>
<feature type="transmembrane region" description="Helical" evidence="1">
    <location>
        <begin position="288"/>
        <end position="308"/>
    </location>
</feature>
<feature type="topological domain" description="Extracellular" evidence="1">
    <location>
        <begin position="309"/>
        <end position="331"/>
    </location>
</feature>
<feature type="transmembrane region" description="Helical" evidence="1">
    <location>
        <begin position="332"/>
        <end position="352"/>
    </location>
</feature>
<feature type="topological domain" description="Cytoplasmic" evidence="1">
    <location>
        <begin position="353"/>
        <end position="360"/>
    </location>
</feature>
<feature type="transmembrane region" description="Helical" evidence="1">
    <location>
        <begin position="361"/>
        <end position="381"/>
    </location>
</feature>
<feature type="topological domain" description="Extracellular" evidence="1">
    <location>
        <begin position="382"/>
        <end position="385"/>
    </location>
</feature>
<feature type="transmembrane region" description="Helical" evidence="1">
    <location>
        <begin position="386"/>
        <end position="406"/>
    </location>
</feature>
<feature type="topological domain" description="Cytoplasmic" evidence="1">
    <location>
        <begin position="407"/>
        <end position="424"/>
    </location>
</feature>
<feature type="transmembrane region" description="Helical" evidence="1">
    <location>
        <begin position="425"/>
        <end position="445"/>
    </location>
</feature>
<feature type="topological domain" description="Extracellular" evidence="1">
    <location>
        <begin position="446"/>
        <end position="450"/>
    </location>
</feature>
<feature type="region of interest" description="Disordered" evidence="2">
    <location>
        <begin position="28"/>
        <end position="52"/>
    </location>
</feature>
<feature type="region of interest" description="Cation selection" evidence="1">
    <location>
        <begin position="143"/>
        <end position="178"/>
    </location>
</feature>
<feature type="region of interest" description="Cation selection" evidence="1">
    <location>
        <begin position="339"/>
        <end position="374"/>
    </location>
</feature>
<gene>
    <name type="primary">CAX1c</name>
    <name type="ordered locus">Os02g0314300</name>
    <name type="ordered locus">Os02g0314400</name>
    <name type="ordered locus">Os02g0314100</name>
    <name type="ordered locus">LOC_Os02g21009</name>
    <name type="ORF">P0705A04.26</name>
</gene>
<name>CAX1C_ORYSJ</name>
<organism>
    <name type="scientific">Oryza sativa subsp. japonica</name>
    <name type="common">Rice</name>
    <dbReference type="NCBI Taxonomy" id="39947"/>
    <lineage>
        <taxon>Eukaryota</taxon>
        <taxon>Viridiplantae</taxon>
        <taxon>Streptophyta</taxon>
        <taxon>Embryophyta</taxon>
        <taxon>Tracheophyta</taxon>
        <taxon>Spermatophyta</taxon>
        <taxon>Magnoliopsida</taxon>
        <taxon>Liliopsida</taxon>
        <taxon>Poales</taxon>
        <taxon>Poaceae</taxon>
        <taxon>BOP clade</taxon>
        <taxon>Oryzoideae</taxon>
        <taxon>Oryzeae</taxon>
        <taxon>Oryzinae</taxon>
        <taxon>Oryza</taxon>
        <taxon>Oryza sativa</taxon>
    </lineage>
</organism>
<evidence type="ECO:0000255" key="1"/>
<evidence type="ECO:0000256" key="2">
    <source>
        <dbReference type="SAM" id="MobiDB-lite"/>
    </source>
</evidence>
<evidence type="ECO:0000269" key="3">
    <source>
    </source>
</evidence>
<evidence type="ECO:0000305" key="4"/>
<comment type="function">
    <text evidence="3">Vacuolar cation/proton exchanger (CAX). Translocates Ca(2+) and other metal ions into vacuoles using the proton gradient formed by H(+)-ATPase and H(+)-pyrophosphatase.</text>
</comment>
<comment type="subcellular location">
    <subcellularLocation>
        <location evidence="4">Vacuole membrane</location>
        <topology evidence="4">Multi-pass membrane protein</topology>
    </subcellularLocation>
    <text>Tonoplast.</text>
</comment>
<comment type="tissue specificity">
    <text evidence="3">Expressed in leaf blades.</text>
</comment>
<comment type="similarity">
    <text evidence="4">Belongs to the Ca(2+):cation antiporter (CaCA) (TC 2.A.19) family. Cation/proton exchanger (CAX) subfamily.</text>
</comment>
<comment type="sequence caution" evidence="4">
    <conflict type="erroneous gene model prediction">
        <sequence resource="EMBL-CDS" id="BAD15983"/>
    </conflict>
</comment>
<dbReference type="EMBL" id="AB112771">
    <property type="protein sequence ID" value="BAD83661.1"/>
    <property type="molecule type" value="mRNA"/>
</dbReference>
<dbReference type="EMBL" id="AP004891">
    <property type="protein sequence ID" value="BAD15983.1"/>
    <property type="status" value="ALT_SEQ"/>
    <property type="molecule type" value="Genomic_DNA"/>
</dbReference>
<dbReference type="EMBL" id="AP008208">
    <property type="protein sequence ID" value="BAH91649.1"/>
    <property type="molecule type" value="Genomic_DNA"/>
</dbReference>
<dbReference type="EMBL" id="AP014958">
    <property type="protein sequence ID" value="BAS78336.1"/>
    <property type="molecule type" value="Genomic_DNA"/>
</dbReference>
<dbReference type="RefSeq" id="XP_015622639.1">
    <property type="nucleotide sequence ID" value="XM_015767153.1"/>
</dbReference>
<dbReference type="SMR" id="Q5KTQ9"/>
<dbReference type="STRING" id="39947.Q5KTQ9"/>
<dbReference type="PaxDb" id="39947-Q5KTQ9"/>
<dbReference type="EnsemblPlants" id="Os02t0314300-00">
    <property type="protein sequence ID" value="Os02t0314300-00"/>
    <property type="gene ID" value="Os02g0314300"/>
</dbReference>
<dbReference type="Gramene" id="Os02t0314300-00">
    <property type="protein sequence ID" value="Os02t0314300-00"/>
    <property type="gene ID" value="Os02g0314300"/>
</dbReference>
<dbReference type="KEGG" id="dosa:Os02g0314100"/>
<dbReference type="eggNOG" id="KOG1397">
    <property type="taxonomic scope" value="Eukaryota"/>
</dbReference>
<dbReference type="HOGENOM" id="CLU_008721_2_0_1"/>
<dbReference type="InParanoid" id="Q5KTQ9"/>
<dbReference type="OMA" id="SAMVWLI"/>
<dbReference type="OrthoDB" id="1699231at2759"/>
<dbReference type="Proteomes" id="UP000000763">
    <property type="component" value="Chromosome 2"/>
</dbReference>
<dbReference type="Proteomes" id="UP000059680">
    <property type="component" value="Chromosome 2"/>
</dbReference>
<dbReference type="GO" id="GO:0009705">
    <property type="term" value="C:plant-type vacuole membrane"/>
    <property type="evidence" value="ECO:0000318"/>
    <property type="project" value="GO_Central"/>
</dbReference>
<dbReference type="GO" id="GO:0015369">
    <property type="term" value="F:calcium:proton antiporter activity"/>
    <property type="evidence" value="ECO:0000318"/>
    <property type="project" value="GO_Central"/>
</dbReference>
<dbReference type="GO" id="GO:0070588">
    <property type="term" value="P:calcium ion transmembrane transport"/>
    <property type="evidence" value="ECO:0000318"/>
    <property type="project" value="GO_Central"/>
</dbReference>
<dbReference type="GO" id="GO:0006874">
    <property type="term" value="P:intracellular calcium ion homeostasis"/>
    <property type="evidence" value="ECO:0000318"/>
    <property type="project" value="GO_Central"/>
</dbReference>
<dbReference type="FunFam" id="1.20.1420.30:FF:000008">
    <property type="entry name" value="Vacuolar cation/proton exchanger"/>
    <property type="match status" value="1"/>
</dbReference>
<dbReference type="FunFam" id="1.20.1420.30:FF:000020">
    <property type="entry name" value="Vacuolar cation/proton exchanger"/>
    <property type="match status" value="1"/>
</dbReference>
<dbReference type="Gene3D" id="1.20.1420.30">
    <property type="entry name" value="NCX, central ion-binding region"/>
    <property type="match status" value="2"/>
</dbReference>
<dbReference type="InterPro" id="IPR004713">
    <property type="entry name" value="CaH_exchang"/>
</dbReference>
<dbReference type="InterPro" id="IPR004798">
    <property type="entry name" value="CAX-like"/>
</dbReference>
<dbReference type="InterPro" id="IPR004837">
    <property type="entry name" value="NaCa_Exmemb"/>
</dbReference>
<dbReference type="InterPro" id="IPR044880">
    <property type="entry name" value="NCX_ion-bd_dom_sf"/>
</dbReference>
<dbReference type="NCBIfam" id="TIGR00846">
    <property type="entry name" value="caca2"/>
    <property type="match status" value="1"/>
</dbReference>
<dbReference type="NCBIfam" id="TIGR00378">
    <property type="entry name" value="cax"/>
    <property type="match status" value="1"/>
</dbReference>
<dbReference type="PANTHER" id="PTHR31503">
    <property type="entry name" value="VACUOLAR CALCIUM ION TRANSPORTER"/>
    <property type="match status" value="1"/>
</dbReference>
<dbReference type="PANTHER" id="PTHR31503:SF96">
    <property type="entry name" value="VACUOLAR CATION_PROTON EXCHANGER 1C"/>
    <property type="match status" value="1"/>
</dbReference>
<dbReference type="Pfam" id="PF01699">
    <property type="entry name" value="Na_Ca_ex"/>
    <property type="match status" value="2"/>
</dbReference>
<reference key="1">
    <citation type="journal article" date="2005" name="Plant Cell Physiol.">
        <title>Expression profile of the genes for rice cation/h+ exchanger family and functional analysis in yeast.</title>
        <authorList>
            <person name="Kamiya T."/>
            <person name="Akahori T."/>
            <person name="Maeshima M."/>
        </authorList>
    </citation>
    <scope>NUCLEOTIDE SEQUENCE [MRNA]</scope>
    <scope>FUNCTION</scope>
    <scope>TISSUE SPECIFICITY</scope>
</reference>
<reference key="2">
    <citation type="journal article" date="2005" name="Nature">
        <title>The map-based sequence of the rice genome.</title>
        <authorList>
            <consortium name="International rice genome sequencing project (IRGSP)"/>
        </authorList>
    </citation>
    <scope>NUCLEOTIDE SEQUENCE [LARGE SCALE GENOMIC DNA]</scope>
    <source>
        <strain>cv. Nipponbare</strain>
    </source>
</reference>
<reference key="3">
    <citation type="journal article" date="2008" name="Nucleic Acids Res.">
        <title>The rice annotation project database (RAP-DB): 2008 update.</title>
        <authorList>
            <consortium name="The rice annotation project (RAP)"/>
        </authorList>
    </citation>
    <scope>GENOME REANNOTATION</scope>
    <source>
        <strain>cv. Nipponbare</strain>
    </source>
</reference>
<reference key="4">
    <citation type="journal article" date="2013" name="Rice">
        <title>Improvement of the Oryza sativa Nipponbare reference genome using next generation sequence and optical map data.</title>
        <authorList>
            <person name="Kawahara Y."/>
            <person name="de la Bastide M."/>
            <person name="Hamilton J.P."/>
            <person name="Kanamori H."/>
            <person name="McCombie W.R."/>
            <person name="Ouyang S."/>
            <person name="Schwartz D.C."/>
            <person name="Tanaka T."/>
            <person name="Wu J."/>
            <person name="Zhou S."/>
            <person name="Childs K.L."/>
            <person name="Davidson R.M."/>
            <person name="Lin H."/>
            <person name="Quesada-Ocampo L."/>
            <person name="Vaillancourt B."/>
            <person name="Sakai H."/>
            <person name="Lee S.S."/>
            <person name="Kim J."/>
            <person name="Numa H."/>
            <person name="Itoh T."/>
            <person name="Buell C.R."/>
            <person name="Matsumoto T."/>
        </authorList>
    </citation>
    <scope>GENOME REANNOTATION</scope>
    <source>
        <strain>cv. Nipponbare</strain>
    </source>
</reference>